<comment type="function">
    <text evidence="1">Calmodulin acts as part of a calcium signal transduction pathway by mediating the control of a large number of enzymes, ion channels, aquaporins and other proteins through calcium-binding. Calcium-binding is required for the activation of calmodulin. Among the enzymes to be stimulated by the calmodulin-calcium complex are a number of protein kinases, such as myosin light-chain kinases and calmodulin-dependent protein kinase type II (CaMK2), and phosphatases.</text>
</comment>
<comment type="miscellaneous">
    <text>This protein has four functional calcium-binding sites.</text>
</comment>
<comment type="similarity">
    <text evidence="3">Belongs to the calmodulin family.</text>
</comment>
<gene>
    <name evidence="1" type="primary">calm2-a</name>
</gene>
<proteinExistence type="evidence at protein level"/>
<protein>
    <recommendedName>
        <fullName evidence="1">Calmodulin-2 A</fullName>
    </recommendedName>
</protein>
<dbReference type="EMBL" id="K01944">
    <property type="protein sequence ID" value="AAA49668.1"/>
    <property type="molecule type" value="mRNA"/>
</dbReference>
<dbReference type="EMBL" id="BC054973">
    <property type="protein sequence ID" value="AAH54973.1"/>
    <property type="molecule type" value="mRNA"/>
</dbReference>
<dbReference type="RefSeq" id="NP_001080864.1">
    <property type="nucleotide sequence ID" value="NM_001087395.1"/>
</dbReference>
<dbReference type="RefSeq" id="NP_001084025.1">
    <property type="nucleotide sequence ID" value="NM_001090556.1"/>
</dbReference>
<dbReference type="RefSeq" id="NP_001089059.1">
    <property type="nucleotide sequence ID" value="NM_001095590.1"/>
</dbReference>
<dbReference type="PDB" id="1UP5">
    <property type="method" value="X-ray"/>
    <property type="resolution" value="1.90 A"/>
    <property type="chains" value="A/B=2-149"/>
</dbReference>
<dbReference type="PDBsum" id="1UP5"/>
<dbReference type="SMR" id="P0DP34"/>
<dbReference type="DNASU" id="108698710"/>
<dbReference type="DNASU" id="380558"/>
<dbReference type="DNASU" id="399259"/>
<dbReference type="DNASU" id="606721"/>
<dbReference type="GeneID" id="380558"/>
<dbReference type="GeneID" id="399259"/>
<dbReference type="GeneID" id="606721"/>
<dbReference type="KEGG" id="xla:108698710"/>
<dbReference type="KEGG" id="xla:380558"/>
<dbReference type="KEGG" id="xla:399259"/>
<dbReference type="KEGG" id="xla:606721"/>
<dbReference type="CTD" id="108698710"/>
<dbReference type="CTD" id="380558"/>
<dbReference type="CTD" id="399259"/>
<dbReference type="CTD" id="606721"/>
<dbReference type="OrthoDB" id="9924840at2759"/>
<dbReference type="Proteomes" id="UP000186698">
    <property type="component" value="Chromosome 5L"/>
</dbReference>
<dbReference type="Proteomes" id="UP000186698">
    <property type="component" value="Chromosome 5S"/>
</dbReference>
<dbReference type="Proteomes" id="UP000186698">
    <property type="component" value="Chromosome 8L"/>
</dbReference>
<dbReference type="Proteomes" id="UP000186698">
    <property type="component" value="Chromosome 8S"/>
</dbReference>
<dbReference type="Bgee" id="108698710">
    <property type="expression patterns" value="Expressed in brain and 19 other cell types or tissues"/>
</dbReference>
<dbReference type="GO" id="GO:0016460">
    <property type="term" value="C:myosin II complex"/>
    <property type="evidence" value="ECO:0000318"/>
    <property type="project" value="GO_Central"/>
</dbReference>
<dbReference type="GO" id="GO:0005509">
    <property type="term" value="F:calcium ion binding"/>
    <property type="evidence" value="ECO:0007669"/>
    <property type="project" value="InterPro"/>
</dbReference>
<dbReference type="GO" id="GO:0005102">
    <property type="term" value="F:signaling receptor binding"/>
    <property type="evidence" value="ECO:0000353"/>
    <property type="project" value="BHF-UCL"/>
</dbReference>
<dbReference type="CDD" id="cd00051">
    <property type="entry name" value="EFh"/>
    <property type="match status" value="2"/>
</dbReference>
<dbReference type="FunFam" id="1.10.238.10:FF:000527">
    <property type="entry name" value="Calmodulin-3"/>
    <property type="match status" value="1"/>
</dbReference>
<dbReference type="Gene3D" id="1.10.238.10">
    <property type="entry name" value="EF-hand"/>
    <property type="match status" value="3"/>
</dbReference>
<dbReference type="InterPro" id="IPR050230">
    <property type="entry name" value="CALM/Myosin/TropC-like"/>
</dbReference>
<dbReference type="InterPro" id="IPR011992">
    <property type="entry name" value="EF-hand-dom_pair"/>
</dbReference>
<dbReference type="InterPro" id="IPR018247">
    <property type="entry name" value="EF_Hand_1_Ca_BS"/>
</dbReference>
<dbReference type="InterPro" id="IPR002048">
    <property type="entry name" value="EF_hand_dom"/>
</dbReference>
<dbReference type="PANTHER" id="PTHR23048:SF0">
    <property type="entry name" value="CALMODULIN LIKE 3"/>
    <property type="match status" value="1"/>
</dbReference>
<dbReference type="PANTHER" id="PTHR23048">
    <property type="entry name" value="MYOSIN LIGHT CHAIN 1, 3"/>
    <property type="match status" value="1"/>
</dbReference>
<dbReference type="Pfam" id="PF13499">
    <property type="entry name" value="EF-hand_7"/>
    <property type="match status" value="2"/>
</dbReference>
<dbReference type="PRINTS" id="PR00450">
    <property type="entry name" value="RECOVERIN"/>
</dbReference>
<dbReference type="SMART" id="SM00054">
    <property type="entry name" value="EFh"/>
    <property type="match status" value="4"/>
</dbReference>
<dbReference type="SUPFAM" id="SSF47473">
    <property type="entry name" value="EF-hand"/>
    <property type="match status" value="1"/>
</dbReference>
<dbReference type="PROSITE" id="PS00018">
    <property type="entry name" value="EF_HAND_1"/>
    <property type="match status" value="4"/>
</dbReference>
<dbReference type="PROSITE" id="PS50222">
    <property type="entry name" value="EF_HAND_2"/>
    <property type="match status" value="4"/>
</dbReference>
<accession>P0DP34</accession>
<accession>P02593</accession>
<accession>P62155</accession>
<accession>P70667</accession>
<accession>P99014</accession>
<accession>Q61379</accession>
<accession>Q61380</accession>
<accession>Q6INP3</accession>
<organism>
    <name type="scientific">Xenopus laevis</name>
    <name type="common">African clawed frog</name>
    <dbReference type="NCBI Taxonomy" id="8355"/>
    <lineage>
        <taxon>Eukaryota</taxon>
        <taxon>Metazoa</taxon>
        <taxon>Chordata</taxon>
        <taxon>Craniata</taxon>
        <taxon>Vertebrata</taxon>
        <taxon>Euteleostomi</taxon>
        <taxon>Amphibia</taxon>
        <taxon>Batrachia</taxon>
        <taxon>Anura</taxon>
        <taxon>Pipoidea</taxon>
        <taxon>Pipidae</taxon>
        <taxon>Xenopodinae</taxon>
        <taxon>Xenopus</taxon>
        <taxon>Xenopus</taxon>
    </lineage>
</organism>
<name>CAM2A_XENLA</name>
<feature type="initiator methionine" description="Removed" evidence="1">
    <location>
        <position position="1"/>
    </location>
</feature>
<feature type="chain" id="PRO_0000439945" description="Calmodulin-2 A">
    <location>
        <begin position="2"/>
        <end position="149"/>
    </location>
</feature>
<feature type="domain" description="EF-hand 1" evidence="2">
    <location>
        <begin position="8"/>
        <end position="43"/>
    </location>
</feature>
<feature type="domain" description="EF-hand 2" evidence="2">
    <location>
        <begin position="44"/>
        <end position="79"/>
    </location>
</feature>
<feature type="domain" description="EF-hand 3" evidence="2">
    <location>
        <begin position="81"/>
        <end position="116"/>
    </location>
</feature>
<feature type="domain" description="EF-hand 4" evidence="2">
    <location>
        <begin position="117"/>
        <end position="149"/>
    </location>
</feature>
<feature type="binding site" evidence="2">
    <location>
        <position position="21"/>
    </location>
    <ligand>
        <name>Ca(2+)</name>
        <dbReference type="ChEBI" id="CHEBI:29108"/>
        <label>1</label>
    </ligand>
</feature>
<feature type="binding site" evidence="2">
    <location>
        <position position="23"/>
    </location>
    <ligand>
        <name>Ca(2+)</name>
        <dbReference type="ChEBI" id="CHEBI:29108"/>
        <label>1</label>
    </ligand>
</feature>
<feature type="binding site" evidence="2">
    <location>
        <position position="25"/>
    </location>
    <ligand>
        <name>Ca(2+)</name>
        <dbReference type="ChEBI" id="CHEBI:29108"/>
        <label>1</label>
    </ligand>
</feature>
<feature type="binding site" evidence="2">
    <location>
        <position position="27"/>
    </location>
    <ligand>
        <name>Ca(2+)</name>
        <dbReference type="ChEBI" id="CHEBI:29108"/>
        <label>1</label>
    </ligand>
</feature>
<feature type="binding site" evidence="2">
    <location>
        <position position="32"/>
    </location>
    <ligand>
        <name>Ca(2+)</name>
        <dbReference type="ChEBI" id="CHEBI:29108"/>
        <label>1</label>
    </ligand>
</feature>
<feature type="binding site" evidence="2">
    <location>
        <position position="57"/>
    </location>
    <ligand>
        <name>Ca(2+)</name>
        <dbReference type="ChEBI" id="CHEBI:29108"/>
        <label>2</label>
    </ligand>
</feature>
<feature type="binding site" evidence="2">
    <location>
        <position position="59"/>
    </location>
    <ligand>
        <name>Ca(2+)</name>
        <dbReference type="ChEBI" id="CHEBI:29108"/>
        <label>2</label>
    </ligand>
</feature>
<feature type="binding site" evidence="2">
    <location>
        <position position="61"/>
    </location>
    <ligand>
        <name>Ca(2+)</name>
        <dbReference type="ChEBI" id="CHEBI:29108"/>
        <label>2</label>
    </ligand>
</feature>
<feature type="binding site" evidence="2">
    <location>
        <position position="63"/>
    </location>
    <ligand>
        <name>Ca(2+)</name>
        <dbReference type="ChEBI" id="CHEBI:29108"/>
        <label>2</label>
    </ligand>
</feature>
<feature type="binding site" evidence="2">
    <location>
        <position position="68"/>
    </location>
    <ligand>
        <name>Ca(2+)</name>
        <dbReference type="ChEBI" id="CHEBI:29108"/>
        <label>2</label>
    </ligand>
</feature>
<feature type="binding site" evidence="2">
    <location>
        <position position="94"/>
    </location>
    <ligand>
        <name>Ca(2+)</name>
        <dbReference type="ChEBI" id="CHEBI:29108"/>
        <label>3</label>
    </ligand>
</feature>
<feature type="binding site" evidence="2">
    <location>
        <position position="96"/>
    </location>
    <ligand>
        <name>Ca(2+)</name>
        <dbReference type="ChEBI" id="CHEBI:29108"/>
        <label>3</label>
    </ligand>
</feature>
<feature type="binding site" evidence="2">
    <location>
        <position position="98"/>
    </location>
    <ligand>
        <name>Ca(2+)</name>
        <dbReference type="ChEBI" id="CHEBI:29108"/>
        <label>3</label>
    </ligand>
</feature>
<feature type="binding site" evidence="2">
    <location>
        <position position="100"/>
    </location>
    <ligand>
        <name>Ca(2+)</name>
        <dbReference type="ChEBI" id="CHEBI:29108"/>
        <label>3</label>
    </ligand>
</feature>
<feature type="binding site" evidence="2">
    <location>
        <position position="105"/>
    </location>
    <ligand>
        <name>Ca(2+)</name>
        <dbReference type="ChEBI" id="CHEBI:29108"/>
        <label>3</label>
    </ligand>
</feature>
<feature type="binding site" evidence="2">
    <location>
        <position position="130"/>
    </location>
    <ligand>
        <name>Ca(2+)</name>
        <dbReference type="ChEBI" id="CHEBI:29108"/>
        <label>4</label>
    </ligand>
</feature>
<feature type="binding site" evidence="2">
    <location>
        <position position="132"/>
    </location>
    <ligand>
        <name>Ca(2+)</name>
        <dbReference type="ChEBI" id="CHEBI:29108"/>
        <label>4</label>
    </ligand>
</feature>
<feature type="binding site" evidence="2">
    <location>
        <position position="134"/>
    </location>
    <ligand>
        <name>Ca(2+)</name>
        <dbReference type="ChEBI" id="CHEBI:29108"/>
        <label>4</label>
    </ligand>
</feature>
<feature type="binding site" evidence="2">
    <location>
        <position position="136"/>
    </location>
    <ligand>
        <name>Ca(2+)</name>
        <dbReference type="ChEBI" id="CHEBI:29108"/>
        <label>4</label>
    </ligand>
</feature>
<feature type="binding site" evidence="2">
    <location>
        <position position="141"/>
    </location>
    <ligand>
        <name>Ca(2+)</name>
        <dbReference type="ChEBI" id="CHEBI:29108"/>
        <label>4</label>
    </ligand>
</feature>
<feature type="modified residue" description="N-acetylalanine" evidence="1">
    <location>
        <position position="2"/>
    </location>
</feature>
<feature type="modified residue" description="N6,N6,N6-trimethyllysine" evidence="1">
    <location>
        <position position="116"/>
    </location>
</feature>
<keyword id="KW-0002">3D-structure</keyword>
<keyword id="KW-0007">Acetylation</keyword>
<keyword id="KW-0106">Calcium</keyword>
<keyword id="KW-0479">Metal-binding</keyword>
<keyword id="KW-0488">Methylation</keyword>
<keyword id="KW-1185">Reference proteome</keyword>
<keyword id="KW-0677">Repeat</keyword>
<evidence type="ECO:0000250" key="1">
    <source>
        <dbReference type="UniProtKB" id="P0DP23"/>
    </source>
</evidence>
<evidence type="ECO:0000255" key="2">
    <source>
        <dbReference type="PROSITE-ProRule" id="PRU00448"/>
    </source>
</evidence>
<evidence type="ECO:0000305" key="3"/>
<reference key="1">
    <citation type="journal article" date="1984" name="Mol. Cell. Biol.">
        <title>Isolation and characterization of calmodulin genes from Xenopus laevis.</title>
        <authorList>
            <person name="Chien Y.-H."/>
            <person name="Dawid I.B."/>
        </authorList>
    </citation>
    <scope>NUCLEOTIDE SEQUENCE [MRNA]</scope>
</reference>
<reference key="2">
    <citation type="submission" date="2005-04" db="EMBL/GenBank/DDBJ databases">
        <authorList>
            <consortium name="NIH - Xenopus Gene Collection (XGC) project"/>
        </authorList>
    </citation>
    <scope>NUCLEOTIDE SEQUENCE [LARGE SCALE MRNA]</scope>
    <source>
        <tissue>Embryo</tissue>
        <tissue>Kidney</tissue>
    </source>
</reference>
<sequence length="149" mass="16838">MADQLTEEQIAEFKEAFSLFDKDGDGTITTKELGTVMRSLGQNPTEAELQDMINEVDADGNGTIDFPEFLTMMARKMKDTDSEEEIREAFRVFDKDGNGYISAAELRHVMTNLGEKLTDEEVDEMIREADIDGDGQVNYEEFVQMMTAK</sequence>